<reference key="1">
    <citation type="journal article" date="2011" name="J. Bacteriol.">
        <title>Comparative genomics of 28 Salmonella enterica isolates: evidence for CRISPR-mediated adaptive sublineage evolution.</title>
        <authorList>
            <person name="Fricke W.F."/>
            <person name="Mammel M.K."/>
            <person name="McDermott P.F."/>
            <person name="Tartera C."/>
            <person name="White D.G."/>
            <person name="Leclerc J.E."/>
            <person name="Ravel J."/>
            <person name="Cebula T.A."/>
        </authorList>
    </citation>
    <scope>NUCLEOTIDE SEQUENCE [LARGE SCALE GENOMIC DNA]</scope>
    <source>
        <strain>SL476</strain>
    </source>
</reference>
<sequence length="283" mass="30358">MAEITASLVKELRERTGAGMMDCKKALTEANGDIELAIENMRKSGAIKAAKKAGNVAADGVIKTKIDGNVAFILEVNCQTDFVAKDAGFQAFADKVLDAAVAGKITDVEVLKAQFEEERVALVAKIGENINIRRVASLEGDVLGSYQHGARIGVLVAAKGADEELVKQLAMHVAASKPEFVKPEDVSADVVEKEYQVQLDIAMQSGKPKEIAEKMVEGRMKKFTGEVSLTGQPFVMEPSKSVGQLLKEHNADVTGFIRFEVGEGIEKVETDFAAEVAAMSKQS</sequence>
<organism>
    <name type="scientific">Salmonella heidelberg (strain SL476)</name>
    <dbReference type="NCBI Taxonomy" id="454169"/>
    <lineage>
        <taxon>Bacteria</taxon>
        <taxon>Pseudomonadati</taxon>
        <taxon>Pseudomonadota</taxon>
        <taxon>Gammaproteobacteria</taxon>
        <taxon>Enterobacterales</taxon>
        <taxon>Enterobacteriaceae</taxon>
        <taxon>Salmonella</taxon>
    </lineage>
</organism>
<evidence type="ECO:0000255" key="1">
    <source>
        <dbReference type="HAMAP-Rule" id="MF_00050"/>
    </source>
</evidence>
<proteinExistence type="inferred from homology"/>
<protein>
    <recommendedName>
        <fullName evidence="1">Elongation factor Ts</fullName>
        <shortName evidence="1">EF-Ts</shortName>
    </recommendedName>
</protein>
<dbReference type="EMBL" id="CP001120">
    <property type="protein sequence ID" value="ACF70250.1"/>
    <property type="molecule type" value="Genomic_DNA"/>
</dbReference>
<dbReference type="RefSeq" id="WP_000808106.1">
    <property type="nucleotide sequence ID" value="NC_011083.1"/>
</dbReference>
<dbReference type="SMR" id="B4TK45"/>
<dbReference type="KEGG" id="seh:SeHA_C0255"/>
<dbReference type="HOGENOM" id="CLU_047155_0_2_6"/>
<dbReference type="Proteomes" id="UP000001866">
    <property type="component" value="Chromosome"/>
</dbReference>
<dbReference type="GO" id="GO:0005737">
    <property type="term" value="C:cytoplasm"/>
    <property type="evidence" value="ECO:0007669"/>
    <property type="project" value="UniProtKB-SubCell"/>
</dbReference>
<dbReference type="GO" id="GO:0003746">
    <property type="term" value="F:translation elongation factor activity"/>
    <property type="evidence" value="ECO:0007669"/>
    <property type="project" value="UniProtKB-UniRule"/>
</dbReference>
<dbReference type="CDD" id="cd14275">
    <property type="entry name" value="UBA_EF-Ts"/>
    <property type="match status" value="1"/>
</dbReference>
<dbReference type="FunFam" id="1.10.286.20:FF:000001">
    <property type="entry name" value="Elongation factor Ts"/>
    <property type="match status" value="1"/>
</dbReference>
<dbReference type="FunFam" id="1.10.8.10:FF:000001">
    <property type="entry name" value="Elongation factor Ts"/>
    <property type="match status" value="1"/>
</dbReference>
<dbReference type="FunFam" id="3.30.479.20:FF:000001">
    <property type="entry name" value="Elongation factor Ts"/>
    <property type="match status" value="1"/>
</dbReference>
<dbReference type="Gene3D" id="1.10.286.20">
    <property type="match status" value="1"/>
</dbReference>
<dbReference type="Gene3D" id="1.10.8.10">
    <property type="entry name" value="DNA helicase RuvA subunit, C-terminal domain"/>
    <property type="match status" value="1"/>
</dbReference>
<dbReference type="Gene3D" id="3.30.479.20">
    <property type="entry name" value="Elongation factor Ts, dimerisation domain"/>
    <property type="match status" value="2"/>
</dbReference>
<dbReference type="HAMAP" id="MF_00050">
    <property type="entry name" value="EF_Ts"/>
    <property type="match status" value="1"/>
</dbReference>
<dbReference type="InterPro" id="IPR036402">
    <property type="entry name" value="EF-Ts_dimer_sf"/>
</dbReference>
<dbReference type="InterPro" id="IPR001816">
    <property type="entry name" value="Transl_elong_EFTs/EF1B"/>
</dbReference>
<dbReference type="InterPro" id="IPR014039">
    <property type="entry name" value="Transl_elong_EFTs/EF1B_dimer"/>
</dbReference>
<dbReference type="InterPro" id="IPR018101">
    <property type="entry name" value="Transl_elong_Ts_CS"/>
</dbReference>
<dbReference type="InterPro" id="IPR009060">
    <property type="entry name" value="UBA-like_sf"/>
</dbReference>
<dbReference type="NCBIfam" id="TIGR00116">
    <property type="entry name" value="tsf"/>
    <property type="match status" value="1"/>
</dbReference>
<dbReference type="PANTHER" id="PTHR11741">
    <property type="entry name" value="ELONGATION FACTOR TS"/>
    <property type="match status" value="1"/>
</dbReference>
<dbReference type="PANTHER" id="PTHR11741:SF0">
    <property type="entry name" value="ELONGATION FACTOR TS, MITOCHONDRIAL"/>
    <property type="match status" value="1"/>
</dbReference>
<dbReference type="Pfam" id="PF00889">
    <property type="entry name" value="EF_TS"/>
    <property type="match status" value="1"/>
</dbReference>
<dbReference type="SUPFAM" id="SSF54713">
    <property type="entry name" value="Elongation factor Ts (EF-Ts), dimerisation domain"/>
    <property type="match status" value="2"/>
</dbReference>
<dbReference type="SUPFAM" id="SSF46934">
    <property type="entry name" value="UBA-like"/>
    <property type="match status" value="1"/>
</dbReference>
<dbReference type="PROSITE" id="PS01126">
    <property type="entry name" value="EF_TS_1"/>
    <property type="match status" value="1"/>
</dbReference>
<dbReference type="PROSITE" id="PS01127">
    <property type="entry name" value="EF_TS_2"/>
    <property type="match status" value="1"/>
</dbReference>
<name>EFTS_SALHS</name>
<accession>B4TK45</accession>
<feature type="chain" id="PRO_1000116785" description="Elongation factor Ts">
    <location>
        <begin position="1"/>
        <end position="283"/>
    </location>
</feature>
<feature type="region of interest" description="Involved in Mg(2+) ion dislocation from EF-Tu" evidence="1">
    <location>
        <begin position="80"/>
        <end position="83"/>
    </location>
</feature>
<comment type="function">
    <text evidence="1">Associates with the EF-Tu.GDP complex and induces the exchange of GDP to GTP. It remains bound to the aminoacyl-tRNA.EF-Tu.GTP complex up to the GTP hydrolysis stage on the ribosome.</text>
</comment>
<comment type="subcellular location">
    <subcellularLocation>
        <location evidence="1">Cytoplasm</location>
    </subcellularLocation>
</comment>
<comment type="similarity">
    <text evidence="1">Belongs to the EF-Ts family.</text>
</comment>
<gene>
    <name evidence="1" type="primary">tsf</name>
    <name type="ordered locus">SeHA_C0255</name>
</gene>
<keyword id="KW-0963">Cytoplasm</keyword>
<keyword id="KW-0251">Elongation factor</keyword>
<keyword id="KW-0648">Protein biosynthesis</keyword>